<dbReference type="EC" id="2.7.11.1"/>
<dbReference type="EMBL" id="AAFI02000003">
    <property type="protein sequence ID" value="EAL73442.1"/>
    <property type="molecule type" value="Genomic_DNA"/>
</dbReference>
<dbReference type="RefSeq" id="XP_647461.1">
    <property type="nucleotide sequence ID" value="XM_642369.1"/>
</dbReference>
<dbReference type="SMR" id="Q55FS2"/>
<dbReference type="FunCoup" id="Q55FS2">
    <property type="interactions" value="93"/>
</dbReference>
<dbReference type="STRING" id="44689.Q55FS2"/>
<dbReference type="PaxDb" id="44689-DDB0216375"/>
<dbReference type="EnsemblProtists" id="EAL73442">
    <property type="protein sequence ID" value="EAL73442"/>
    <property type="gene ID" value="DDB_G0267978"/>
</dbReference>
<dbReference type="GeneID" id="8616268"/>
<dbReference type="KEGG" id="ddi:DDB_G0267978"/>
<dbReference type="dictyBase" id="DDB_G0267978">
    <property type="gene designation" value="krsB"/>
</dbReference>
<dbReference type="VEuPathDB" id="AmoebaDB:DDB_G0267978"/>
<dbReference type="eggNOG" id="KOG0574">
    <property type="taxonomic scope" value="Eukaryota"/>
</dbReference>
<dbReference type="HOGENOM" id="CLU_282613_0_0_1"/>
<dbReference type="InParanoid" id="Q55FS2"/>
<dbReference type="OMA" id="ATWKDNP"/>
<dbReference type="PRO" id="PR:Q55FS2"/>
<dbReference type="Proteomes" id="UP000002195">
    <property type="component" value="Chromosome 1"/>
</dbReference>
<dbReference type="GO" id="GO:0005737">
    <property type="term" value="C:cytoplasm"/>
    <property type="evidence" value="ECO:0000250"/>
    <property type="project" value="dictyBase"/>
</dbReference>
<dbReference type="GO" id="GO:0005634">
    <property type="term" value="C:nucleus"/>
    <property type="evidence" value="ECO:0000250"/>
    <property type="project" value="dictyBase"/>
</dbReference>
<dbReference type="GO" id="GO:0005524">
    <property type="term" value="F:ATP binding"/>
    <property type="evidence" value="ECO:0007669"/>
    <property type="project" value="UniProtKB-KW"/>
</dbReference>
<dbReference type="GO" id="GO:0046872">
    <property type="term" value="F:metal ion binding"/>
    <property type="evidence" value="ECO:0007669"/>
    <property type="project" value="UniProtKB-KW"/>
</dbReference>
<dbReference type="GO" id="GO:0106310">
    <property type="term" value="F:protein serine kinase activity"/>
    <property type="evidence" value="ECO:0007669"/>
    <property type="project" value="RHEA"/>
</dbReference>
<dbReference type="GO" id="GO:0004674">
    <property type="term" value="F:protein serine/threonine kinase activity"/>
    <property type="evidence" value="ECO:0000250"/>
    <property type="project" value="dictyBase"/>
</dbReference>
<dbReference type="GO" id="GO:0031152">
    <property type="term" value="P:aggregation involved in sorocarp development"/>
    <property type="evidence" value="ECO:0000315"/>
    <property type="project" value="dictyBase"/>
</dbReference>
<dbReference type="GO" id="GO:0048870">
    <property type="term" value="P:cell motility"/>
    <property type="evidence" value="ECO:0000315"/>
    <property type="project" value="dictyBase"/>
</dbReference>
<dbReference type="GO" id="GO:0043327">
    <property type="term" value="P:chemotaxis to cAMP"/>
    <property type="evidence" value="ECO:0000315"/>
    <property type="project" value="dictyBase"/>
</dbReference>
<dbReference type="GO" id="GO:0035556">
    <property type="term" value="P:intracellular signal transduction"/>
    <property type="evidence" value="ECO:0000318"/>
    <property type="project" value="GO_Central"/>
</dbReference>
<dbReference type="GO" id="GO:0090090">
    <property type="term" value="P:negative regulation of canonical Wnt signaling pathway"/>
    <property type="evidence" value="ECO:0000318"/>
    <property type="project" value="GO_Central"/>
</dbReference>
<dbReference type="GO" id="GO:0010812">
    <property type="term" value="P:negative regulation of cell-substrate adhesion"/>
    <property type="evidence" value="ECO:0000315"/>
    <property type="project" value="dictyBase"/>
</dbReference>
<dbReference type="GO" id="GO:1904777">
    <property type="term" value="P:negative regulation of protein localization to cell cortex"/>
    <property type="evidence" value="ECO:0000315"/>
    <property type="project" value="dictyBase"/>
</dbReference>
<dbReference type="GO" id="GO:1903077">
    <property type="term" value="P:negative regulation of protein localization to plasma membrane"/>
    <property type="evidence" value="ECO:0000315"/>
    <property type="project" value="dictyBase"/>
</dbReference>
<dbReference type="GO" id="GO:0043065">
    <property type="term" value="P:positive regulation of apoptotic process"/>
    <property type="evidence" value="ECO:0000318"/>
    <property type="project" value="GO_Central"/>
</dbReference>
<dbReference type="GO" id="GO:0012501">
    <property type="term" value="P:programmed cell death"/>
    <property type="evidence" value="ECO:0000250"/>
    <property type="project" value="dictyBase"/>
</dbReference>
<dbReference type="GO" id="GO:0036211">
    <property type="term" value="P:protein modification process"/>
    <property type="evidence" value="ECO:0000314"/>
    <property type="project" value="dictyBase"/>
</dbReference>
<dbReference type="GO" id="GO:0006468">
    <property type="term" value="P:protein phosphorylation"/>
    <property type="evidence" value="ECO:0000250"/>
    <property type="project" value="dictyBase"/>
</dbReference>
<dbReference type="GO" id="GO:0043408">
    <property type="term" value="P:regulation of MAPK cascade"/>
    <property type="evidence" value="ECO:0000318"/>
    <property type="project" value="GO_Central"/>
</dbReference>
<dbReference type="GO" id="GO:0007165">
    <property type="term" value="P:signal transduction"/>
    <property type="evidence" value="ECO:0000250"/>
    <property type="project" value="dictyBase"/>
</dbReference>
<dbReference type="CDD" id="cd06612">
    <property type="entry name" value="STKc_MST1_2"/>
    <property type="match status" value="1"/>
</dbReference>
<dbReference type="FunFam" id="2.60.120.380:FF:000005">
    <property type="entry name" value="calpain-type cysteine protease DEK1"/>
    <property type="match status" value="1"/>
</dbReference>
<dbReference type="FunFam" id="3.30.200.20:FF:000040">
    <property type="entry name" value="Dual specificity mitogen-activated protein kinase kinase"/>
    <property type="match status" value="1"/>
</dbReference>
<dbReference type="FunFam" id="1.10.510.10:FF:000605">
    <property type="entry name" value="serine/threonine-protein kinase 3 isoform X2"/>
    <property type="match status" value="1"/>
</dbReference>
<dbReference type="Gene3D" id="2.60.120.380">
    <property type="match status" value="4"/>
</dbReference>
<dbReference type="Gene3D" id="1.10.510.10">
    <property type="entry name" value="Transferase(Phosphotransferase) domain 1"/>
    <property type="match status" value="1"/>
</dbReference>
<dbReference type="InterPro" id="IPR022682">
    <property type="entry name" value="Calpain_domain_III"/>
</dbReference>
<dbReference type="InterPro" id="IPR022683">
    <property type="entry name" value="Calpain_III"/>
</dbReference>
<dbReference type="InterPro" id="IPR036213">
    <property type="entry name" value="Calpain_III_sf"/>
</dbReference>
<dbReference type="InterPro" id="IPR011009">
    <property type="entry name" value="Kinase-like_dom_sf"/>
</dbReference>
<dbReference type="InterPro" id="IPR000719">
    <property type="entry name" value="Prot_kinase_dom"/>
</dbReference>
<dbReference type="InterPro" id="IPR017441">
    <property type="entry name" value="Protein_kinase_ATP_BS"/>
</dbReference>
<dbReference type="InterPro" id="IPR050629">
    <property type="entry name" value="STE20/SPS1-PAK"/>
</dbReference>
<dbReference type="PANTHER" id="PTHR48012:SF2">
    <property type="entry name" value="STERILE20-LIKE KINASE, ISOFORM B"/>
    <property type="match status" value="1"/>
</dbReference>
<dbReference type="PANTHER" id="PTHR48012">
    <property type="entry name" value="STERILE20-LIKE KINASE, ISOFORM B-RELATED"/>
    <property type="match status" value="1"/>
</dbReference>
<dbReference type="Pfam" id="PF01067">
    <property type="entry name" value="Calpain_III"/>
    <property type="match status" value="4"/>
</dbReference>
<dbReference type="Pfam" id="PF00069">
    <property type="entry name" value="Pkinase"/>
    <property type="match status" value="1"/>
</dbReference>
<dbReference type="SMART" id="SM00720">
    <property type="entry name" value="calpain_III"/>
    <property type="match status" value="4"/>
</dbReference>
<dbReference type="SMART" id="SM00220">
    <property type="entry name" value="S_TKc"/>
    <property type="match status" value="1"/>
</dbReference>
<dbReference type="SUPFAM" id="SSF49758">
    <property type="entry name" value="Calpain large subunit, middle domain (domain III)"/>
    <property type="match status" value="4"/>
</dbReference>
<dbReference type="SUPFAM" id="SSF56112">
    <property type="entry name" value="Protein kinase-like (PK-like)"/>
    <property type="match status" value="1"/>
</dbReference>
<dbReference type="PROSITE" id="PS00107">
    <property type="entry name" value="PROTEIN_KINASE_ATP"/>
    <property type="match status" value="1"/>
</dbReference>
<dbReference type="PROSITE" id="PS50011">
    <property type="entry name" value="PROTEIN_KINASE_DOM"/>
    <property type="match status" value="1"/>
</dbReference>
<feature type="chain" id="PRO_0000327886" description="Serine/threonine-protein kinase 4 homolog B">
    <location>
        <begin position="1"/>
        <end position="1105"/>
    </location>
</feature>
<feature type="domain" description="Protein kinase" evidence="2">
    <location>
        <begin position="23"/>
        <end position="274"/>
    </location>
</feature>
<feature type="region of interest" description="Disordered" evidence="3">
    <location>
        <begin position="348"/>
        <end position="396"/>
    </location>
</feature>
<feature type="region of interest" description="Disordered" evidence="3">
    <location>
        <begin position="411"/>
        <end position="482"/>
    </location>
</feature>
<feature type="region of interest" description="Disordered" evidence="3">
    <location>
        <begin position="495"/>
        <end position="541"/>
    </location>
</feature>
<feature type="region of interest" description="Calpain-like cysteine protease-like">
    <location>
        <begin position="516"/>
        <end position="1105"/>
    </location>
</feature>
<feature type="region of interest" description="Domain III 1">
    <location>
        <begin position="641"/>
        <end position="668"/>
    </location>
</feature>
<feature type="region of interest" description="Domain III 2">
    <location>
        <begin position="791"/>
        <end position="830"/>
    </location>
</feature>
<feature type="region of interest" description="Domain III 3">
    <location>
        <begin position="836"/>
        <end position="972"/>
    </location>
</feature>
<feature type="region of interest" description="Domain III 4">
    <location>
        <begin position="1076"/>
        <end position="1103"/>
    </location>
</feature>
<feature type="compositionally biased region" description="Low complexity" evidence="3">
    <location>
        <begin position="358"/>
        <end position="396"/>
    </location>
</feature>
<feature type="compositionally biased region" description="Low complexity" evidence="3">
    <location>
        <begin position="411"/>
        <end position="437"/>
    </location>
</feature>
<feature type="compositionally biased region" description="Polar residues" evidence="3">
    <location>
        <begin position="438"/>
        <end position="458"/>
    </location>
</feature>
<feature type="compositionally biased region" description="Low complexity" evidence="3">
    <location>
        <begin position="459"/>
        <end position="473"/>
    </location>
</feature>
<feature type="compositionally biased region" description="Low complexity" evidence="3">
    <location>
        <begin position="513"/>
        <end position="541"/>
    </location>
</feature>
<feature type="active site" description="Proton acceptor" evidence="2">
    <location>
        <position position="142"/>
    </location>
</feature>
<feature type="binding site" evidence="2">
    <location>
        <begin position="29"/>
        <end position="37"/>
    </location>
    <ligand>
        <name>ATP</name>
        <dbReference type="ChEBI" id="CHEBI:30616"/>
    </ligand>
</feature>
<feature type="binding site" evidence="2">
    <location>
        <position position="52"/>
    </location>
    <ligand>
        <name>ATP</name>
        <dbReference type="ChEBI" id="CHEBI:30616"/>
    </ligand>
</feature>
<protein>
    <recommendedName>
        <fullName>Serine/threonine-protein kinase 4 homolog B</fullName>
        <ecNumber>2.7.11.1</ecNumber>
    </recommendedName>
    <alternativeName>
        <fullName>Kinase responsive to stress B</fullName>
    </alternativeName>
    <alternativeName>
        <fullName>STE20-like kinase krsB</fullName>
    </alternativeName>
</protein>
<evidence type="ECO:0000250" key="1"/>
<evidence type="ECO:0000255" key="2">
    <source>
        <dbReference type="PROSITE-ProRule" id="PRU00159"/>
    </source>
</evidence>
<evidence type="ECO:0000256" key="3">
    <source>
        <dbReference type="SAM" id="MobiDB-lite"/>
    </source>
</evidence>
<evidence type="ECO:0000305" key="4"/>
<sequence>MEESGQLSDFKLPEGIKDPSLEFDLIECLGRGSFGSVYKATYKKTGNIVAVKLVPINEDFQEILKEINIMKQCKSKYVVQYYGNYFKDETCWIIMEYCAFGSVSDMMNITNRVLNEEQIALVCYSTLKGLYYLHRNSKIHRDIKPGNILVSEEGECKLADFGVSGQLSERTRKRNTVIGTPFFLAPEVIQEVGYDNKADIWALGISAIEMAEFHPPYHDLHPMRVLFMIPTSTSPTLKEPHKWSPEFSDFIALCLAKEQSQRPSAKDLLKHSFFEKKLKGSYVMKSLSETAQMVIERCGGREEAVKAAAERKSKQSGVSVDFIHCESVDEPDSSDEEDLLERNNKRLSTQIQQKKEQQAQQQQQQAQQQQQQQQQQQQQYQPPSPNNNNRTTTKNNDINELDSLLNNMMMSSSASASTSPSPSSISSNGNKSGTTTNDYHTGNGRTSSSSPQFGLQHQNSSNSFPSSPNTVPSVESKPRQPASELDDLLEEMMNPSFGNRARNSSGGGGGLTPIGSPITKRPTPTMQSSTTTTTSSSSLPLPMSPSVYLSPTRVSGIWSGESAGGCANTTLWRKNPQYLLQITATTTIRITLRQTGDKLVHIGFYFARSNTGANDQFRRRITLTKEYLVPGLDITFLKSTEVSAKITMEPGYYVIIPATFEPNQEGSFELDVTATSDNIGGQYNSNNNIKLSEIKGDRDWRIISDRFEWRGSSAGGSFSGSSATWKDNPKFFFETTQTSNTTIVLGKLSDIPKETYIGFYIFKADKNCPFISLTANNLYSKTSFVNGIEVVHTQQQMPPGCYIIVPCTYDSRQEGSFTLTCYSDCQQGSIYKLDLSEQILTVHGEWRGATSGGCLNHTTWRNNAQYLIHNTSSSPTKVTIMLEQLEKMDNQQLPFVGFYVAKSPTPNLDKKLFSLTPKDIVGNTEFINDYQVHFTSIMEPNTSYIIIPSTFTPGIEYPFNLRVITNQHNVIQISRLPEWSTRKLSGEWRGQSCGGRYSNTSSSWTLNPRFRFNLPRGGRFTIILAQAEKPSYNGIGFYYFKTLQDGTLREFVCKSGFICGKEIVLESSINEGVTGVVIPSTFEPNIQDSFNLTIYSEFDLDFYNN</sequence>
<gene>
    <name type="primary">krsB</name>
    <name type="synonym">krs2</name>
    <name type="ORF">DDB_G0267978</name>
</gene>
<reference key="1">
    <citation type="journal article" date="2005" name="Nature">
        <title>The genome of the social amoeba Dictyostelium discoideum.</title>
        <authorList>
            <person name="Eichinger L."/>
            <person name="Pachebat J.A."/>
            <person name="Gloeckner G."/>
            <person name="Rajandream M.A."/>
            <person name="Sucgang R."/>
            <person name="Berriman M."/>
            <person name="Song J."/>
            <person name="Olsen R."/>
            <person name="Szafranski K."/>
            <person name="Xu Q."/>
            <person name="Tunggal B."/>
            <person name="Kummerfeld S."/>
            <person name="Madera M."/>
            <person name="Konfortov B.A."/>
            <person name="Rivero F."/>
            <person name="Bankier A.T."/>
            <person name="Lehmann R."/>
            <person name="Hamlin N."/>
            <person name="Davies R."/>
            <person name="Gaudet P."/>
            <person name="Fey P."/>
            <person name="Pilcher K."/>
            <person name="Chen G."/>
            <person name="Saunders D."/>
            <person name="Sodergren E.J."/>
            <person name="Davis P."/>
            <person name="Kerhornou A."/>
            <person name="Nie X."/>
            <person name="Hall N."/>
            <person name="Anjard C."/>
            <person name="Hemphill L."/>
            <person name="Bason N."/>
            <person name="Farbrother P."/>
            <person name="Desany B."/>
            <person name="Just E."/>
            <person name="Morio T."/>
            <person name="Rost R."/>
            <person name="Churcher C.M."/>
            <person name="Cooper J."/>
            <person name="Haydock S."/>
            <person name="van Driessche N."/>
            <person name="Cronin A."/>
            <person name="Goodhead I."/>
            <person name="Muzny D.M."/>
            <person name="Mourier T."/>
            <person name="Pain A."/>
            <person name="Lu M."/>
            <person name="Harper D."/>
            <person name="Lindsay R."/>
            <person name="Hauser H."/>
            <person name="James K.D."/>
            <person name="Quiles M."/>
            <person name="Madan Babu M."/>
            <person name="Saito T."/>
            <person name="Buchrieser C."/>
            <person name="Wardroper A."/>
            <person name="Felder M."/>
            <person name="Thangavelu M."/>
            <person name="Johnson D."/>
            <person name="Knights A."/>
            <person name="Loulseged H."/>
            <person name="Mungall K.L."/>
            <person name="Oliver K."/>
            <person name="Price C."/>
            <person name="Quail M.A."/>
            <person name="Urushihara H."/>
            <person name="Hernandez J."/>
            <person name="Rabbinowitsch E."/>
            <person name="Steffen D."/>
            <person name="Sanders M."/>
            <person name="Ma J."/>
            <person name="Kohara Y."/>
            <person name="Sharp S."/>
            <person name="Simmonds M.N."/>
            <person name="Spiegler S."/>
            <person name="Tivey A."/>
            <person name="Sugano S."/>
            <person name="White B."/>
            <person name="Walker D."/>
            <person name="Woodward J.R."/>
            <person name="Winckler T."/>
            <person name="Tanaka Y."/>
            <person name="Shaulsky G."/>
            <person name="Schleicher M."/>
            <person name="Weinstock G.M."/>
            <person name="Rosenthal A."/>
            <person name="Cox E.C."/>
            <person name="Chisholm R.L."/>
            <person name="Gibbs R.A."/>
            <person name="Loomis W.F."/>
            <person name="Platzer M."/>
            <person name="Kay R.R."/>
            <person name="Williams J.G."/>
            <person name="Dear P.H."/>
            <person name="Noegel A.A."/>
            <person name="Barrell B.G."/>
            <person name="Kuspa A."/>
        </authorList>
    </citation>
    <scope>NUCLEOTIDE SEQUENCE [LARGE SCALE GENOMIC DNA]</scope>
    <source>
        <strain>AX4</strain>
    </source>
</reference>
<accession>Q55FS2</accession>
<keyword id="KW-0067">ATP-binding</keyword>
<keyword id="KW-0418">Kinase</keyword>
<keyword id="KW-0464">Manganese</keyword>
<keyword id="KW-0479">Metal-binding</keyword>
<keyword id="KW-0547">Nucleotide-binding</keyword>
<keyword id="KW-1185">Reference proteome</keyword>
<keyword id="KW-0677">Repeat</keyword>
<keyword id="KW-0723">Serine/threonine-protein kinase</keyword>
<keyword id="KW-0808">Transferase</keyword>
<name>STK4L_DICDI</name>
<proteinExistence type="inferred from homology"/>
<organism>
    <name type="scientific">Dictyostelium discoideum</name>
    <name type="common">Social amoeba</name>
    <dbReference type="NCBI Taxonomy" id="44689"/>
    <lineage>
        <taxon>Eukaryota</taxon>
        <taxon>Amoebozoa</taxon>
        <taxon>Evosea</taxon>
        <taxon>Eumycetozoa</taxon>
        <taxon>Dictyostelia</taxon>
        <taxon>Dictyosteliales</taxon>
        <taxon>Dictyosteliaceae</taxon>
        <taxon>Dictyostelium</taxon>
    </lineage>
</organism>
<comment type="function">
    <text>Probable serine/threonine-protein kinase.</text>
</comment>
<comment type="catalytic activity">
    <reaction>
        <text>L-seryl-[protein] + ATP = O-phospho-L-seryl-[protein] + ADP + H(+)</text>
        <dbReference type="Rhea" id="RHEA:17989"/>
        <dbReference type="Rhea" id="RHEA-COMP:9863"/>
        <dbReference type="Rhea" id="RHEA-COMP:11604"/>
        <dbReference type="ChEBI" id="CHEBI:15378"/>
        <dbReference type="ChEBI" id="CHEBI:29999"/>
        <dbReference type="ChEBI" id="CHEBI:30616"/>
        <dbReference type="ChEBI" id="CHEBI:83421"/>
        <dbReference type="ChEBI" id="CHEBI:456216"/>
        <dbReference type="EC" id="2.7.11.1"/>
    </reaction>
</comment>
<comment type="catalytic activity">
    <reaction>
        <text>L-threonyl-[protein] + ATP = O-phospho-L-threonyl-[protein] + ADP + H(+)</text>
        <dbReference type="Rhea" id="RHEA:46608"/>
        <dbReference type="Rhea" id="RHEA-COMP:11060"/>
        <dbReference type="Rhea" id="RHEA-COMP:11605"/>
        <dbReference type="ChEBI" id="CHEBI:15378"/>
        <dbReference type="ChEBI" id="CHEBI:30013"/>
        <dbReference type="ChEBI" id="CHEBI:30616"/>
        <dbReference type="ChEBI" id="CHEBI:61977"/>
        <dbReference type="ChEBI" id="CHEBI:456216"/>
        <dbReference type="EC" id="2.7.11.1"/>
    </reaction>
</comment>
<comment type="cofactor">
    <cofactor evidence="1">
        <name>Mn(2+)</name>
        <dbReference type="ChEBI" id="CHEBI:29035"/>
    </cofactor>
</comment>
<comment type="similarity">
    <text evidence="4">In the N-terminal section; belongs to the protein kinase superfamily. STE Ser/Thr protein kinase family. STE20 subfamily.</text>
</comment>
<comment type="similarity">
    <text evidence="4">In the C-terminal section; belongs to the peptidase C2 family.</text>
</comment>